<feature type="chain" id="PRO_0000255021" description="Cytochrome b">
    <location>
        <begin position="1"/>
        <end position="379"/>
    </location>
</feature>
<feature type="transmembrane region" description="Helical" evidence="2">
    <location>
        <begin position="33"/>
        <end position="53"/>
    </location>
</feature>
<feature type="transmembrane region" description="Helical" evidence="2">
    <location>
        <begin position="77"/>
        <end position="98"/>
    </location>
</feature>
<feature type="transmembrane region" description="Helical" evidence="2">
    <location>
        <begin position="113"/>
        <end position="133"/>
    </location>
</feature>
<feature type="transmembrane region" description="Helical" evidence="2">
    <location>
        <begin position="178"/>
        <end position="198"/>
    </location>
</feature>
<feature type="transmembrane region" description="Helical" evidence="2">
    <location>
        <begin position="226"/>
        <end position="246"/>
    </location>
</feature>
<feature type="transmembrane region" description="Helical" evidence="2">
    <location>
        <begin position="288"/>
        <end position="308"/>
    </location>
</feature>
<feature type="transmembrane region" description="Helical" evidence="2">
    <location>
        <begin position="320"/>
        <end position="340"/>
    </location>
</feature>
<feature type="transmembrane region" description="Helical" evidence="2">
    <location>
        <begin position="347"/>
        <end position="367"/>
    </location>
</feature>
<feature type="binding site" description="axial binding residue" evidence="2">
    <location>
        <position position="83"/>
    </location>
    <ligand>
        <name>heme b</name>
        <dbReference type="ChEBI" id="CHEBI:60344"/>
        <label>b562</label>
    </ligand>
    <ligandPart>
        <name>Fe</name>
        <dbReference type="ChEBI" id="CHEBI:18248"/>
    </ligandPart>
</feature>
<feature type="binding site" description="axial binding residue" evidence="2">
    <location>
        <position position="97"/>
    </location>
    <ligand>
        <name>heme b</name>
        <dbReference type="ChEBI" id="CHEBI:60344"/>
        <label>b566</label>
    </ligand>
    <ligandPart>
        <name>Fe</name>
        <dbReference type="ChEBI" id="CHEBI:18248"/>
    </ligandPart>
</feature>
<feature type="binding site" description="axial binding residue" evidence="2">
    <location>
        <position position="182"/>
    </location>
    <ligand>
        <name>heme b</name>
        <dbReference type="ChEBI" id="CHEBI:60344"/>
        <label>b562</label>
    </ligand>
    <ligandPart>
        <name>Fe</name>
        <dbReference type="ChEBI" id="CHEBI:18248"/>
    </ligandPart>
</feature>
<feature type="binding site" description="axial binding residue" evidence="2">
    <location>
        <position position="196"/>
    </location>
    <ligand>
        <name>heme b</name>
        <dbReference type="ChEBI" id="CHEBI:60344"/>
        <label>b566</label>
    </ligand>
    <ligandPart>
        <name>Fe</name>
        <dbReference type="ChEBI" id="CHEBI:18248"/>
    </ligandPart>
</feature>
<feature type="binding site" evidence="2">
    <location>
        <position position="201"/>
    </location>
    <ligand>
        <name>a ubiquinone</name>
        <dbReference type="ChEBI" id="CHEBI:16389"/>
    </ligand>
</feature>
<feature type="sequence variant" description="In strain: Isolate JLP 16556.">
    <original>W</original>
    <variation>L</variation>
    <location>
        <position position="175"/>
    </location>
</feature>
<feature type="sequence variant" description="In strain: Isolate JLP 16556.">
    <original>C</original>
    <variation>F</variation>
    <location>
        <position position="187"/>
    </location>
</feature>
<feature type="sequence variant" description="In strain: Isolate JLP 16556.">
    <original>V</original>
    <variation>M</variation>
    <location>
        <position position="240"/>
    </location>
</feature>
<feature type="sequence variant" description="In strain: Isolate JLP 16556.">
    <original>S</original>
    <variation>T</variation>
    <location>
        <position position="246"/>
    </location>
</feature>
<feature type="sequence variant" description="In strain: Isolate JLP 16556.">
    <original>V</original>
    <variation>M</variation>
    <location>
        <position position="302"/>
    </location>
</feature>
<feature type="sequence variant" description="In strain: Isolate JLP 16556.">
    <original>V</original>
    <variation>I</variation>
    <location>
        <position position="334"/>
    </location>
</feature>
<feature type="sequence variant" description="In strain: Isolate JLP 16556.">
    <original>V</original>
    <variation>L</variation>
    <location>
        <position position="353"/>
    </location>
</feature>
<sequence>MTNMRKSHPLIKIVNHSFIDLPAPSNISAWWNFGSLLGVCLGLQILTGLFLAMHYTADTTTAFSSVTHICRDVNYGWLIRYMHANGASMFFIFLYFHIGRGIYYGSYSFMDTWNIGVLLLFAVMATAFMGYVLPWGQMSFWGATVITNLLSAIPYIGPTLVEWIWGGFSVDKATWTRFFAFHFILPCIITAMVMIHLLFLHETGSNNPSGMNSDSDKIPFHPYYTIKDILGVLFMMITLVSLVMFSPDLLGDPDNYTPANPLNTPPHIKPEWYFLFAYAILRSIPNKLGGVLALVFSILILVLFPILHSSKQRSMSFRPLSQCLMWMLVANLLVLTWIGGQPVEHPFITIGQVASVTYFFTILILMPSTALMENKLLKW</sequence>
<evidence type="ECO:0000250" key="1"/>
<evidence type="ECO:0000250" key="2">
    <source>
        <dbReference type="UniProtKB" id="P00157"/>
    </source>
</evidence>
<evidence type="ECO:0000255" key="3">
    <source>
        <dbReference type="PROSITE-ProRule" id="PRU00967"/>
    </source>
</evidence>
<evidence type="ECO:0000255" key="4">
    <source>
        <dbReference type="PROSITE-ProRule" id="PRU00968"/>
    </source>
</evidence>
<proteinExistence type="inferred from homology"/>
<gene>
    <name type="primary">MT-CYB</name>
    <name type="synonym">COB</name>
    <name type="synonym">CYTB</name>
    <name type="synonym">MTCYB</name>
</gene>
<reference key="1">
    <citation type="journal article" date="1998" name="Mol. Phylogenet. Evol.">
        <title>The molecular phylogenetics of tuco-tucos (genus Ctenomys, Rodentia: Octodontidae) suggests an early burst of speciation.</title>
        <authorList>
            <person name="Lessa E.P."/>
            <person name="Cook J.A."/>
        </authorList>
    </citation>
    <scope>NUCLEOTIDE SEQUENCE [GENOMIC DNA]</scope>
    <source>
        <strain>Isolate FC5509</strain>
    </source>
</reference>
<reference key="2">
    <citation type="journal article" date="2002" name="Mol. Phylogenet. Evol.">
        <title>Evolution of South American spiny rats (Rodentia, Echimyidae): the star-phylogeny hypothesis revisited.</title>
        <authorList>
            <person name="Leite Y.L.R."/>
            <person name="Patton J.L."/>
        </authorList>
    </citation>
    <scope>NUCLEOTIDE SEQUENCE [GENOMIC DNA]</scope>
    <source>
        <strain>Isolate JLP 16556</strain>
    </source>
</reference>
<dbReference type="EMBL" id="AF007063">
    <property type="protein sequence ID" value="AAB69222.1"/>
    <property type="molecule type" value="Genomic_DNA"/>
</dbReference>
<dbReference type="EMBL" id="AF422920">
    <property type="protein sequence ID" value="AAN31458.1"/>
    <property type="molecule type" value="Genomic_DNA"/>
</dbReference>
<dbReference type="SMR" id="O20549"/>
<dbReference type="GO" id="GO:0005743">
    <property type="term" value="C:mitochondrial inner membrane"/>
    <property type="evidence" value="ECO:0007669"/>
    <property type="project" value="UniProtKB-SubCell"/>
</dbReference>
<dbReference type="GO" id="GO:0045275">
    <property type="term" value="C:respiratory chain complex III"/>
    <property type="evidence" value="ECO:0007669"/>
    <property type="project" value="InterPro"/>
</dbReference>
<dbReference type="GO" id="GO:0046872">
    <property type="term" value="F:metal ion binding"/>
    <property type="evidence" value="ECO:0007669"/>
    <property type="project" value="UniProtKB-KW"/>
</dbReference>
<dbReference type="GO" id="GO:0008121">
    <property type="term" value="F:ubiquinol-cytochrome-c reductase activity"/>
    <property type="evidence" value="ECO:0007669"/>
    <property type="project" value="InterPro"/>
</dbReference>
<dbReference type="GO" id="GO:0006122">
    <property type="term" value="P:mitochondrial electron transport, ubiquinol to cytochrome c"/>
    <property type="evidence" value="ECO:0007669"/>
    <property type="project" value="TreeGrafter"/>
</dbReference>
<dbReference type="CDD" id="cd00290">
    <property type="entry name" value="cytochrome_b_C"/>
    <property type="match status" value="1"/>
</dbReference>
<dbReference type="CDD" id="cd00284">
    <property type="entry name" value="Cytochrome_b_N"/>
    <property type="match status" value="1"/>
</dbReference>
<dbReference type="FunFam" id="1.20.810.10:FF:000002">
    <property type="entry name" value="Cytochrome b"/>
    <property type="match status" value="1"/>
</dbReference>
<dbReference type="Gene3D" id="1.20.810.10">
    <property type="entry name" value="Cytochrome Bc1 Complex, Chain C"/>
    <property type="match status" value="1"/>
</dbReference>
<dbReference type="InterPro" id="IPR005798">
    <property type="entry name" value="Cyt_b/b6_C"/>
</dbReference>
<dbReference type="InterPro" id="IPR036150">
    <property type="entry name" value="Cyt_b/b6_C_sf"/>
</dbReference>
<dbReference type="InterPro" id="IPR005797">
    <property type="entry name" value="Cyt_b/b6_N"/>
</dbReference>
<dbReference type="InterPro" id="IPR027387">
    <property type="entry name" value="Cytb/b6-like_sf"/>
</dbReference>
<dbReference type="InterPro" id="IPR030689">
    <property type="entry name" value="Cytochrome_b"/>
</dbReference>
<dbReference type="InterPro" id="IPR048260">
    <property type="entry name" value="Cytochrome_b_C_euk/bac"/>
</dbReference>
<dbReference type="InterPro" id="IPR048259">
    <property type="entry name" value="Cytochrome_b_N_euk/bac"/>
</dbReference>
<dbReference type="InterPro" id="IPR016174">
    <property type="entry name" value="Di-haem_cyt_TM"/>
</dbReference>
<dbReference type="PANTHER" id="PTHR19271">
    <property type="entry name" value="CYTOCHROME B"/>
    <property type="match status" value="1"/>
</dbReference>
<dbReference type="PANTHER" id="PTHR19271:SF16">
    <property type="entry name" value="CYTOCHROME B"/>
    <property type="match status" value="1"/>
</dbReference>
<dbReference type="Pfam" id="PF00032">
    <property type="entry name" value="Cytochrom_B_C"/>
    <property type="match status" value="1"/>
</dbReference>
<dbReference type="Pfam" id="PF00033">
    <property type="entry name" value="Cytochrome_B"/>
    <property type="match status" value="1"/>
</dbReference>
<dbReference type="PIRSF" id="PIRSF038885">
    <property type="entry name" value="COB"/>
    <property type="match status" value="1"/>
</dbReference>
<dbReference type="SUPFAM" id="SSF81648">
    <property type="entry name" value="a domain/subunit of cytochrome bc1 complex (Ubiquinol-cytochrome c reductase)"/>
    <property type="match status" value="1"/>
</dbReference>
<dbReference type="SUPFAM" id="SSF81342">
    <property type="entry name" value="Transmembrane di-heme cytochromes"/>
    <property type="match status" value="1"/>
</dbReference>
<dbReference type="PROSITE" id="PS51003">
    <property type="entry name" value="CYTB_CTER"/>
    <property type="match status" value="1"/>
</dbReference>
<dbReference type="PROSITE" id="PS51002">
    <property type="entry name" value="CYTB_NTER"/>
    <property type="match status" value="1"/>
</dbReference>
<geneLocation type="mitochondrion"/>
<accession>O20549</accession>
<accession>Q8HD55</accession>
<organism>
    <name type="scientific">Ctenomys haigi</name>
    <name type="common">Haig's tuco-tuco</name>
    <dbReference type="NCBI Taxonomy" id="61869"/>
    <lineage>
        <taxon>Eukaryota</taxon>
        <taxon>Metazoa</taxon>
        <taxon>Chordata</taxon>
        <taxon>Craniata</taxon>
        <taxon>Vertebrata</taxon>
        <taxon>Euteleostomi</taxon>
        <taxon>Mammalia</taxon>
        <taxon>Eutheria</taxon>
        <taxon>Euarchontoglires</taxon>
        <taxon>Glires</taxon>
        <taxon>Rodentia</taxon>
        <taxon>Hystricomorpha</taxon>
        <taxon>Ctenomyidae</taxon>
        <taxon>Ctenomys</taxon>
    </lineage>
</organism>
<keyword id="KW-0249">Electron transport</keyword>
<keyword id="KW-0349">Heme</keyword>
<keyword id="KW-0408">Iron</keyword>
<keyword id="KW-0472">Membrane</keyword>
<keyword id="KW-0479">Metal-binding</keyword>
<keyword id="KW-0496">Mitochondrion</keyword>
<keyword id="KW-0999">Mitochondrion inner membrane</keyword>
<keyword id="KW-0679">Respiratory chain</keyword>
<keyword id="KW-0812">Transmembrane</keyword>
<keyword id="KW-1133">Transmembrane helix</keyword>
<keyword id="KW-0813">Transport</keyword>
<keyword id="KW-0830">Ubiquinone</keyword>
<name>CYB_CTEHA</name>
<comment type="function">
    <text evidence="2">Component of the ubiquinol-cytochrome c reductase complex (complex III or cytochrome b-c1 complex) that is part of the mitochondrial respiratory chain. The b-c1 complex mediates electron transfer from ubiquinol to cytochrome c. Contributes to the generation of a proton gradient across the mitochondrial membrane that is then used for ATP synthesis.</text>
</comment>
<comment type="cofactor">
    <cofactor evidence="2">
        <name>heme b</name>
        <dbReference type="ChEBI" id="CHEBI:60344"/>
    </cofactor>
    <text evidence="2">Binds 2 heme b groups non-covalently.</text>
</comment>
<comment type="subunit">
    <text evidence="2">The cytochrome bc1 complex contains 11 subunits: 3 respiratory subunits (MT-CYB, CYC1 and UQCRFS1), 2 core proteins (UQCRC1 and UQCRC2) and 6 low-molecular weight proteins (UQCRH/QCR6, UQCRB/QCR7, UQCRQ/QCR8, UQCR10/QCR9, UQCR11/QCR10 and a cleavage product of UQCRFS1). This cytochrome bc1 complex then forms a dimer.</text>
</comment>
<comment type="subcellular location">
    <subcellularLocation>
        <location evidence="2">Mitochondrion inner membrane</location>
        <topology evidence="2">Multi-pass membrane protein</topology>
    </subcellularLocation>
</comment>
<comment type="miscellaneous">
    <text evidence="1">Heme 1 (or BL or b562) is low-potential and absorbs at about 562 nm, and heme 2 (or BH or b566) is high-potential and absorbs at about 566 nm.</text>
</comment>
<comment type="similarity">
    <text evidence="3 4">Belongs to the cytochrome b family.</text>
</comment>
<comment type="caution">
    <text evidence="2">The full-length protein contains only eight transmembrane helices, not nine as predicted by bioinformatics tools.</text>
</comment>
<protein>
    <recommendedName>
        <fullName>Cytochrome b</fullName>
    </recommendedName>
    <alternativeName>
        <fullName>Complex III subunit 3</fullName>
    </alternativeName>
    <alternativeName>
        <fullName>Complex III subunit III</fullName>
    </alternativeName>
    <alternativeName>
        <fullName>Cytochrome b-c1 complex subunit 3</fullName>
    </alternativeName>
    <alternativeName>
        <fullName>Ubiquinol-cytochrome-c reductase complex cytochrome b subunit</fullName>
    </alternativeName>
</protein>